<name>ARMET_DROPS</name>
<gene>
    <name evidence="2" type="primary">Manf</name>
    <name type="ORF">GA20031</name>
</gene>
<dbReference type="EMBL" id="CM000070">
    <property type="protein sequence ID" value="EAL28603.1"/>
    <property type="molecule type" value="Genomic_DNA"/>
</dbReference>
<dbReference type="RefSeq" id="XP_001359457.1">
    <property type="nucleotide sequence ID" value="XM_001359420.4"/>
</dbReference>
<dbReference type="SMR" id="Q295V5"/>
<dbReference type="FunCoup" id="Q295V5">
    <property type="interactions" value="397"/>
</dbReference>
<dbReference type="STRING" id="46245.Q295V5"/>
<dbReference type="EnsemblMetazoa" id="FBtr0283056">
    <property type="protein sequence ID" value="FBpp0281494"/>
    <property type="gene ID" value="FBgn0080027"/>
</dbReference>
<dbReference type="GeneID" id="4802560"/>
<dbReference type="KEGG" id="dpo:4802560"/>
<dbReference type="CTD" id="7873"/>
<dbReference type="eggNOG" id="KOG4154">
    <property type="taxonomic scope" value="Eukaryota"/>
</dbReference>
<dbReference type="HOGENOM" id="CLU_099080_1_0_1"/>
<dbReference type="InParanoid" id="Q295V5"/>
<dbReference type="OMA" id="WSMPADK"/>
<dbReference type="PhylomeDB" id="Q295V5"/>
<dbReference type="ChiTaRS" id="Manf">
    <property type="organism name" value="fly"/>
</dbReference>
<dbReference type="Proteomes" id="UP000001819">
    <property type="component" value="Chromosome 2"/>
</dbReference>
<dbReference type="Bgee" id="FBgn0080027">
    <property type="expression patterns" value="Expressed in male reproductive system and 2 other cell types or tissues"/>
</dbReference>
<dbReference type="GO" id="GO:0005783">
    <property type="term" value="C:endoplasmic reticulum"/>
    <property type="evidence" value="ECO:0007669"/>
    <property type="project" value="TreeGrafter"/>
</dbReference>
<dbReference type="GO" id="GO:0005615">
    <property type="term" value="C:extracellular space"/>
    <property type="evidence" value="ECO:0007669"/>
    <property type="project" value="TreeGrafter"/>
</dbReference>
<dbReference type="GO" id="GO:0005509">
    <property type="term" value="F:calcium ion binding"/>
    <property type="evidence" value="ECO:0007669"/>
    <property type="project" value="InterPro"/>
</dbReference>
<dbReference type="GO" id="GO:0071542">
    <property type="term" value="P:dopaminergic neuron differentiation"/>
    <property type="evidence" value="ECO:0007669"/>
    <property type="project" value="TreeGrafter"/>
</dbReference>
<dbReference type="GO" id="GO:0031175">
    <property type="term" value="P:neuron projection development"/>
    <property type="evidence" value="ECO:0007669"/>
    <property type="project" value="TreeGrafter"/>
</dbReference>
<dbReference type="FunFam" id="1.10.225.10:FF:000003">
    <property type="entry name" value="Mesencephalic astrocyte-derived neurotrophic factor"/>
    <property type="match status" value="1"/>
</dbReference>
<dbReference type="FunFam" id="1.10.720.30:FF:000003">
    <property type="entry name" value="Mesencephalic astrocyte-derived neurotrophic factor"/>
    <property type="match status" value="1"/>
</dbReference>
<dbReference type="Gene3D" id="1.10.720.30">
    <property type="entry name" value="SAP domain"/>
    <property type="match status" value="1"/>
</dbReference>
<dbReference type="Gene3D" id="1.10.225.10">
    <property type="entry name" value="Saposin-like"/>
    <property type="match status" value="1"/>
</dbReference>
<dbReference type="InterPro" id="IPR045333">
    <property type="entry name" value="ARMET-like"/>
</dbReference>
<dbReference type="InterPro" id="IPR019345">
    <property type="entry name" value="ARMET_C"/>
</dbReference>
<dbReference type="InterPro" id="IPR045332">
    <property type="entry name" value="ARMET_N"/>
</dbReference>
<dbReference type="InterPro" id="IPR018247">
    <property type="entry name" value="EF_Hand_1_Ca_BS"/>
</dbReference>
<dbReference type="InterPro" id="IPR002048">
    <property type="entry name" value="EF_hand_dom"/>
</dbReference>
<dbReference type="InterPro" id="IPR036361">
    <property type="entry name" value="SAP_dom_sf"/>
</dbReference>
<dbReference type="PANTHER" id="PTHR12990">
    <property type="entry name" value="ARMET-LIKE PROTEIN"/>
    <property type="match status" value="1"/>
</dbReference>
<dbReference type="PANTHER" id="PTHR12990:SF5">
    <property type="entry name" value="MESENCEPHALIC ASTROCYTE-DERIVED NEUROTROPHIC FACTOR HOMOLOG"/>
    <property type="match status" value="1"/>
</dbReference>
<dbReference type="Pfam" id="PF10208">
    <property type="entry name" value="ARMET_C"/>
    <property type="match status" value="1"/>
</dbReference>
<dbReference type="Pfam" id="PF20145">
    <property type="entry name" value="ARMET_N"/>
    <property type="match status" value="1"/>
</dbReference>
<dbReference type="SUPFAM" id="SSF68906">
    <property type="entry name" value="SAP domain"/>
    <property type="match status" value="1"/>
</dbReference>
<comment type="function">
    <text evidence="2">Required during the maturation of the embryonic nervous system for maintenance of neuronal and cuticular connectivity. Essential for maintenance of dopaminergic neurons and dopamine levels (By similarity).</text>
</comment>
<comment type="subcellular location">
    <subcellularLocation>
        <location evidence="2">Secreted</location>
    </subcellularLocation>
</comment>
<comment type="similarity">
    <text evidence="3">Belongs to the ARMET family.</text>
</comment>
<feature type="signal peptide" evidence="3">
    <location>
        <begin position="1"/>
        <end position="22"/>
    </location>
</feature>
<feature type="chain" id="PRO_0000390943" description="Mesencephalic astrocyte-derived neurotrophic factor homolog">
    <location>
        <begin position="23"/>
        <end position="173"/>
    </location>
</feature>
<feature type="disulfide bond" evidence="1">
    <location>
        <begin position="28"/>
        <end position="114"/>
    </location>
</feature>
<feature type="disulfide bond" evidence="1">
    <location>
        <begin position="31"/>
        <end position="103"/>
    </location>
</feature>
<feature type="disulfide bond" evidence="1">
    <location>
        <begin position="61"/>
        <end position="72"/>
    </location>
</feature>
<feature type="disulfide bond" evidence="1">
    <location>
        <begin position="148"/>
        <end position="151"/>
    </location>
</feature>
<evidence type="ECO:0000250" key="1">
    <source>
        <dbReference type="UniProtKB" id="P55145"/>
    </source>
</evidence>
<evidence type="ECO:0000250" key="2">
    <source>
        <dbReference type="UniProtKB" id="Q9XZ63"/>
    </source>
</evidence>
<evidence type="ECO:0000255" key="3"/>
<evidence type="ECO:0000312" key="4">
    <source>
        <dbReference type="EMBL" id="EAL28603.1"/>
    </source>
</evidence>
<keyword id="KW-0217">Developmental protein</keyword>
<keyword id="KW-1015">Disulfide bond</keyword>
<keyword id="KW-1185">Reference proteome</keyword>
<keyword id="KW-0964">Secreted</keyword>
<keyword id="KW-0732">Signal</keyword>
<protein>
    <recommendedName>
        <fullName>Mesencephalic astrocyte-derived neurotrophic factor homolog</fullName>
    </recommendedName>
    <alternativeName>
        <fullName>MANF/CDNF-like protein</fullName>
    </alternativeName>
</protein>
<reference evidence="4" key="1">
    <citation type="journal article" date="2005" name="Genome Res.">
        <title>Comparative genome sequencing of Drosophila pseudoobscura: chromosomal, gene, and cis-element evolution.</title>
        <authorList>
            <person name="Richards S."/>
            <person name="Liu Y."/>
            <person name="Bettencourt B.R."/>
            <person name="Hradecky P."/>
            <person name="Letovsky S."/>
            <person name="Nielsen R."/>
            <person name="Thornton K."/>
            <person name="Hubisz M.J."/>
            <person name="Chen R."/>
            <person name="Meisel R.P."/>
            <person name="Couronne O."/>
            <person name="Hua S."/>
            <person name="Smith M.A."/>
            <person name="Zhang P."/>
            <person name="Liu J."/>
            <person name="Bussemaker H.J."/>
            <person name="van Batenburg M.F."/>
            <person name="Howells S.L."/>
            <person name="Scherer S.E."/>
            <person name="Sodergren E."/>
            <person name="Matthews B.B."/>
            <person name="Crosby M.A."/>
            <person name="Schroeder A.J."/>
            <person name="Ortiz-Barrientos D."/>
            <person name="Rives C.M."/>
            <person name="Metzker M.L."/>
            <person name="Muzny D.M."/>
            <person name="Scott G."/>
            <person name="Steffen D."/>
            <person name="Wheeler D.A."/>
            <person name="Worley K.C."/>
            <person name="Havlak P."/>
            <person name="Durbin K.J."/>
            <person name="Egan A."/>
            <person name="Gill R."/>
            <person name="Hume J."/>
            <person name="Morgan M.B."/>
            <person name="Miner G."/>
            <person name="Hamilton C."/>
            <person name="Huang Y."/>
            <person name="Waldron L."/>
            <person name="Verduzco D."/>
            <person name="Clerc-Blankenburg K.P."/>
            <person name="Dubchak I."/>
            <person name="Noor M.A.F."/>
            <person name="Anderson W."/>
            <person name="White K.P."/>
            <person name="Clark A.G."/>
            <person name="Schaeffer S.W."/>
            <person name="Gelbart W.M."/>
            <person name="Weinstock G.M."/>
            <person name="Gibbs R.A."/>
        </authorList>
    </citation>
    <scope>NUCLEOTIDE SEQUENCE [LARGE SCALE GENOMIC DNA]</scope>
    <source>
        <strain>MV2-25 / Tucson 14011-0121.94</strain>
    </source>
</reference>
<organism>
    <name type="scientific">Drosophila pseudoobscura pseudoobscura</name>
    <name type="common">Fruit fly</name>
    <dbReference type="NCBI Taxonomy" id="46245"/>
    <lineage>
        <taxon>Eukaryota</taxon>
        <taxon>Metazoa</taxon>
        <taxon>Ecdysozoa</taxon>
        <taxon>Arthropoda</taxon>
        <taxon>Hexapoda</taxon>
        <taxon>Insecta</taxon>
        <taxon>Pterygota</taxon>
        <taxon>Neoptera</taxon>
        <taxon>Endopterygota</taxon>
        <taxon>Diptera</taxon>
        <taxon>Brachycera</taxon>
        <taxon>Muscomorpha</taxon>
        <taxon>Ephydroidea</taxon>
        <taxon>Drosophilidae</taxon>
        <taxon>Drosophila</taxon>
        <taxon>Sophophora</taxon>
    </lineage>
</organism>
<sequence length="173" mass="20024">MKTTHLVLVLCFLAGVAQTTLALKEEDCEVCIKTVRRFAASLDDAIKGDYKQIETEFKKFCKTQKNKEHRFCYYLGGLEESATGILNEMSKPLSWSMPAEKVCEKLKKKDAQICDLRYEKQIDLNSVDLKKLKVRDLKKILNDWDESCDGCLEKSDFIKRIEELKPKYARSEL</sequence>
<accession>Q295V5</accession>
<proteinExistence type="inferred from homology"/>